<reference key="1">
    <citation type="journal article" date="2005" name="Nature">
        <title>The map-based sequence of the rice genome.</title>
        <authorList>
            <consortium name="International rice genome sequencing project (IRGSP)"/>
        </authorList>
    </citation>
    <scope>NUCLEOTIDE SEQUENCE [LARGE SCALE GENOMIC DNA]</scope>
    <source>
        <strain>cv. Nipponbare</strain>
    </source>
</reference>
<reference key="2">
    <citation type="journal article" date="2008" name="Nucleic Acids Res.">
        <title>The rice annotation project database (RAP-DB): 2008 update.</title>
        <authorList>
            <consortium name="The rice annotation project (RAP)"/>
        </authorList>
    </citation>
    <scope>GENOME REANNOTATION</scope>
    <source>
        <strain>cv. Nipponbare</strain>
    </source>
</reference>
<reference key="3">
    <citation type="journal article" date="2013" name="Rice">
        <title>Improvement of the Oryza sativa Nipponbare reference genome using next generation sequence and optical map data.</title>
        <authorList>
            <person name="Kawahara Y."/>
            <person name="de la Bastide M."/>
            <person name="Hamilton J.P."/>
            <person name="Kanamori H."/>
            <person name="McCombie W.R."/>
            <person name="Ouyang S."/>
            <person name="Schwartz D.C."/>
            <person name="Tanaka T."/>
            <person name="Wu J."/>
            <person name="Zhou S."/>
            <person name="Childs K.L."/>
            <person name="Davidson R.M."/>
            <person name="Lin H."/>
            <person name="Quesada-Ocampo L."/>
            <person name="Vaillancourt B."/>
            <person name="Sakai H."/>
            <person name="Lee S.S."/>
            <person name="Kim J."/>
            <person name="Numa H."/>
            <person name="Itoh T."/>
            <person name="Buell C.R."/>
            <person name="Matsumoto T."/>
        </authorList>
    </citation>
    <scope>GENOME REANNOTATION</scope>
    <source>
        <strain>cv. Nipponbare</strain>
    </source>
</reference>
<reference key="4">
    <citation type="journal article" date="2011" name="Acta Biochim. Biophys. Sin.">
        <title>Structural characterization and expression pattern analysis of the rice PLT gene family.</title>
        <authorList>
            <person name="Li P."/>
            <person name="Xue H."/>
        </authorList>
    </citation>
    <scope>TISSUE SPECIFICITY</scope>
</reference>
<reference key="5">
    <citation type="journal article" date="2011" name="Plant J.">
        <title>The auxin responsive AP2/ERF transcription factor CROWN ROOTLESS5 is involved in crown root initiation in rice through the induction of OsRR1, a type-A response regulator of cytokinin signaling.</title>
        <authorList>
            <person name="Kitomi Y."/>
            <person name="Ito H."/>
            <person name="Hobo T."/>
            <person name="Aya K."/>
            <person name="Kitano H."/>
            <person name="Inukai Y."/>
        </authorList>
    </citation>
    <scope>FUNCTION</scope>
    <scope>TISSUE SPECIFICITY</scope>
    <scope>INDUCTION BY AUXIN</scope>
    <scope>DISRUPTION PHENOTYPE</scope>
    <source>
        <strain>cv. Kinmaze</strain>
    </source>
</reference>
<keyword id="KW-0217">Developmental protein</keyword>
<keyword id="KW-0238">DNA-binding</keyword>
<keyword id="KW-0539">Nucleus</keyword>
<keyword id="KW-1185">Reference proteome</keyword>
<keyword id="KW-0677">Repeat</keyword>
<keyword id="KW-0804">Transcription</keyword>
<keyword id="KW-0805">Transcription regulation</keyword>
<evidence type="ECO:0000255" key="1">
    <source>
        <dbReference type="PROSITE-ProRule" id="PRU00366"/>
    </source>
</evidence>
<evidence type="ECO:0000256" key="2">
    <source>
        <dbReference type="SAM" id="MobiDB-lite"/>
    </source>
</evidence>
<evidence type="ECO:0000269" key="3">
    <source>
    </source>
</evidence>
<evidence type="ECO:0000269" key="4">
    <source>
    </source>
</evidence>
<evidence type="ECO:0000303" key="5">
    <source>
    </source>
</evidence>
<evidence type="ECO:0000303" key="6">
    <source>
    </source>
</evidence>
<evidence type="ECO:0000305" key="7"/>
<evidence type="ECO:0000312" key="8">
    <source>
        <dbReference type="EMBL" id="BAC56815.1"/>
    </source>
</evidence>
<evidence type="ECO:0000312" key="9">
    <source>
        <dbReference type="EMBL" id="BAS99889.1"/>
    </source>
</evidence>
<comment type="function">
    <text evidence="3">Acts as a positive regulator of adventitious (crown) root formation by promoting its initiation. Promotes adventitious root initiation through repression of cytokinin signaling by positively regulating the two-component response regulator RR1. Regulated by the auxin response factor and transcriptional activator ARF23/ARF1.</text>
</comment>
<comment type="subcellular location">
    <subcellularLocation>
        <location evidence="1">Nucleus</location>
    </subcellularLocation>
</comment>
<comment type="tissue specificity">
    <text evidence="3 4">Highly expressed at the base of the stem. Expressed in stems. Expressed a low levels in crown roots and seeds (PubMed:21807632). Expressed in the stem region where adventitious (crown) root initiation occurs (PubMed:21481033).</text>
</comment>
<comment type="induction">
    <text evidence="3">Induced by auxin.</text>
</comment>
<comment type="disruption phenotype">
    <text evidence="3">Strong reduction of adventitious (crown) root formation.</text>
</comment>
<comment type="similarity">
    <text evidence="7">Belongs to the AP2/ERF transcription factor family. AP2 subfamily.</text>
</comment>
<comment type="sequence caution" evidence="7">
    <conflict type="erroneous gene model prediction">
        <sequence resource="EMBL-CDS" id="BAF20720"/>
    </conflict>
</comment>
<comment type="sequence caution" evidence="7">
    <conflict type="erroneous gene model prediction">
        <sequence resource="EMBL-CDS" id="BAS99889"/>
    </conflict>
</comment>
<dbReference type="EMBL" id="AP005309">
    <property type="protein sequence ID" value="BAC56815.1"/>
    <property type="molecule type" value="Genomic_DNA"/>
</dbReference>
<dbReference type="EMBL" id="AP008213">
    <property type="protein sequence ID" value="BAF20720.1"/>
    <property type="status" value="ALT_SEQ"/>
    <property type="molecule type" value="Genomic_DNA"/>
</dbReference>
<dbReference type="EMBL" id="AP014963">
    <property type="protein sequence ID" value="BAS99889.1"/>
    <property type="status" value="ALT_SEQ"/>
    <property type="molecule type" value="Genomic_DNA"/>
</dbReference>
<dbReference type="SMR" id="Q84Z02"/>
<dbReference type="FunCoup" id="Q84Z02">
    <property type="interactions" value="14"/>
</dbReference>
<dbReference type="STRING" id="39947.Q84Z02"/>
<dbReference type="PaxDb" id="39947-Q84Z02"/>
<dbReference type="EnsemblPlants" id="Os07t0124700-02">
    <property type="protein sequence ID" value="Os07t0124700-02"/>
    <property type="gene ID" value="Os07g0124700"/>
</dbReference>
<dbReference type="Gramene" id="Os07t0124700-02">
    <property type="protein sequence ID" value="Os07t0124700-02"/>
    <property type="gene ID" value="Os07g0124700"/>
</dbReference>
<dbReference type="KEGG" id="dosa:Os07g0124700"/>
<dbReference type="eggNOG" id="ENOG502QQ82">
    <property type="taxonomic scope" value="Eukaryota"/>
</dbReference>
<dbReference type="HOGENOM" id="CLU_013549_1_0_1"/>
<dbReference type="InParanoid" id="Q84Z02"/>
<dbReference type="Proteomes" id="UP000000763">
    <property type="component" value="Chromosome 7"/>
</dbReference>
<dbReference type="Proteomes" id="UP000059680">
    <property type="component" value="Chromosome 7"/>
</dbReference>
<dbReference type="GO" id="GO:0005634">
    <property type="term" value="C:nucleus"/>
    <property type="evidence" value="ECO:0007669"/>
    <property type="project" value="UniProtKB-SubCell"/>
</dbReference>
<dbReference type="GO" id="GO:0003677">
    <property type="term" value="F:DNA binding"/>
    <property type="evidence" value="ECO:0007669"/>
    <property type="project" value="UniProtKB-KW"/>
</dbReference>
<dbReference type="GO" id="GO:0003700">
    <property type="term" value="F:DNA-binding transcription factor activity"/>
    <property type="evidence" value="ECO:0007669"/>
    <property type="project" value="InterPro"/>
</dbReference>
<dbReference type="GO" id="GO:0048830">
    <property type="term" value="P:adventitious root development"/>
    <property type="evidence" value="ECO:0000315"/>
    <property type="project" value="UniProtKB"/>
</dbReference>
<dbReference type="GO" id="GO:0080037">
    <property type="term" value="P:negative regulation of cytokinin-activated signaling pathway"/>
    <property type="evidence" value="ECO:0000315"/>
    <property type="project" value="UniProtKB"/>
</dbReference>
<dbReference type="CDD" id="cd00018">
    <property type="entry name" value="AP2"/>
    <property type="match status" value="2"/>
</dbReference>
<dbReference type="FunFam" id="3.30.730.10:FF:000002">
    <property type="entry name" value="AP2-like ethylene-responsive transcription factor"/>
    <property type="match status" value="1"/>
</dbReference>
<dbReference type="FunFam" id="3.30.730.10:FF:000003">
    <property type="entry name" value="AP2-like ethylene-responsive transcription factor ANT"/>
    <property type="match status" value="1"/>
</dbReference>
<dbReference type="Gene3D" id="3.30.730.10">
    <property type="entry name" value="AP2/ERF domain"/>
    <property type="match status" value="2"/>
</dbReference>
<dbReference type="InterPro" id="IPR001471">
    <property type="entry name" value="AP2/ERF_dom"/>
</dbReference>
<dbReference type="InterPro" id="IPR036955">
    <property type="entry name" value="AP2/ERF_dom_sf"/>
</dbReference>
<dbReference type="InterPro" id="IPR016177">
    <property type="entry name" value="DNA-bd_dom_sf"/>
</dbReference>
<dbReference type="PANTHER" id="PTHR32467">
    <property type="entry name" value="AP2-LIKE ETHYLENE-RESPONSIVE TRANSCRIPTION FACTOR"/>
    <property type="match status" value="1"/>
</dbReference>
<dbReference type="PANTHER" id="PTHR32467:SF157">
    <property type="entry name" value="AP2-LIKE ETHYLENE-RESPONSIVE TRANSCRIPTION FACTOR CRL5"/>
    <property type="match status" value="1"/>
</dbReference>
<dbReference type="Pfam" id="PF00847">
    <property type="entry name" value="AP2"/>
    <property type="match status" value="2"/>
</dbReference>
<dbReference type="PRINTS" id="PR00367">
    <property type="entry name" value="ETHRSPELEMNT"/>
</dbReference>
<dbReference type="SMART" id="SM00380">
    <property type="entry name" value="AP2"/>
    <property type="match status" value="2"/>
</dbReference>
<dbReference type="SUPFAM" id="SSF54171">
    <property type="entry name" value="DNA-binding domain"/>
    <property type="match status" value="2"/>
</dbReference>
<dbReference type="PROSITE" id="PS51032">
    <property type="entry name" value="AP2_ERF"/>
    <property type="match status" value="2"/>
</dbReference>
<name>CRL5_ORYSJ</name>
<accession>Q84Z02</accession>
<accession>Q0D8V3</accession>
<organism>
    <name type="scientific">Oryza sativa subsp. japonica</name>
    <name type="common">Rice</name>
    <dbReference type="NCBI Taxonomy" id="39947"/>
    <lineage>
        <taxon>Eukaryota</taxon>
        <taxon>Viridiplantae</taxon>
        <taxon>Streptophyta</taxon>
        <taxon>Embryophyta</taxon>
        <taxon>Tracheophyta</taxon>
        <taxon>Spermatophyta</taxon>
        <taxon>Magnoliopsida</taxon>
        <taxon>Liliopsida</taxon>
        <taxon>Poales</taxon>
        <taxon>Poaceae</taxon>
        <taxon>BOP clade</taxon>
        <taxon>Oryzoideae</taxon>
        <taxon>Oryzeae</taxon>
        <taxon>Oryzinae</taxon>
        <taxon>Oryza</taxon>
        <taxon>Oryza sativa</taxon>
    </lineage>
</organism>
<sequence length="639" mass="67622">MTNSNNGNGGTNAAASGWLGFSLSPHMASSTMDEHHHVHHHQQQQQQQQQQQHHQQQQHGLFFPSVTTAAAAAAYGLAGDVVAATNGYYSQLASMPLKSDGSLCIMEALRRTDQDHHGPKLEDFLGAAQPAMALSLDNTSSFYYGGGGAAAAGHGQHGYLQACDLYGGPAAPSLVTAADEEAAAAAAAMASWVAARGAATAYATGAADANAAENVLPSATAAQHLHHPLALSMSSGSLSSCITAGEYGMAAVAAADGGRKRGGAGGGGQKQPVHHRKSIDTFGQRTSQYRGVTRHRWTGRYEAHLWDNSCKKEGQTRKGRQGGYDMEEKAARAYDLAALKYWGPSTHINFPLEDYQEELEEMKNMTRQEYVAHLRRKSSGFSRGASMYRGVTRHHQHGRWQARIGRVSGNKDLYLGTFSTQEEAAEAYDVAAIKFRGLNAVTNFDITRYDVDKIMASNTLLPADLARRNAATTTSKDDHSAAGAGAIVSVHSAADIAVADTLWKATTAPRQQQQHHDDVVLSGADQAAFSVLHDLVAVDAAAAHQQQQQQQHMSMSAASSLVTSLSNSREGSPDRGGGLSMLFAKPSPAVAASAQQQASTKLMAAPLPLGSWVSSPPASARPPAVSIAHMPLFAAWTDA</sequence>
<feature type="chain" id="PRO_0000444148" description="AP2-like ethylene-responsive transcription factor CRL5">
    <location>
        <begin position="1"/>
        <end position="639"/>
    </location>
</feature>
<feature type="DNA-binding region" description="AP2/ERF 1" evidence="1">
    <location>
        <begin position="288"/>
        <end position="351"/>
    </location>
</feature>
<feature type="DNA-binding region" description="AP2/ERF 2" evidence="1">
    <location>
        <begin position="387"/>
        <end position="445"/>
    </location>
</feature>
<feature type="region of interest" description="Disordered" evidence="2">
    <location>
        <begin position="25"/>
        <end position="59"/>
    </location>
</feature>
<feature type="region of interest" description="Disordered" evidence="2">
    <location>
        <begin position="258"/>
        <end position="277"/>
    </location>
</feature>
<feature type="region of interest" description="Disordered" evidence="2">
    <location>
        <begin position="547"/>
        <end position="579"/>
    </location>
</feature>
<feature type="compositionally biased region" description="Low complexity" evidence="2">
    <location>
        <begin position="43"/>
        <end position="59"/>
    </location>
</feature>
<feature type="compositionally biased region" description="Low complexity" evidence="2">
    <location>
        <begin position="547"/>
        <end position="561"/>
    </location>
</feature>
<protein>
    <recommendedName>
        <fullName evidence="7">AP2-like ethylene-responsive transcription factor CRL5</fullName>
    </recommendedName>
    <alternativeName>
        <fullName>Protein CROWN ROOTLESS 5</fullName>
    </alternativeName>
    <alternativeName>
        <fullName evidence="6">Protein PLETHORA 8</fullName>
        <shortName evidence="6">OsPLT8</shortName>
    </alternativeName>
</protein>
<gene>
    <name evidence="5" type="primary">CRL5</name>
    <name evidence="6" type="synonym">PLT8</name>
    <name evidence="9" type="ordered locus">Os07g0124700</name>
    <name evidence="7" type="ordered locus">LOC_Os07g03250</name>
    <name evidence="8" type="ORF">P0474G09.118</name>
</gene>
<proteinExistence type="evidence at transcript level"/>